<gene>
    <name evidence="1" type="primary">rplD</name>
    <name type="ordered locus">SSU98_0073</name>
</gene>
<sequence>MANVTLFDQTGKQAGEVVLNDAIFGIEPNQAVVFDVIISQRASLRQGTHAVKNRSAVSGGGRKPWRQKGTGRARQGSIRSPQWRGGGVVFGPTPRSYAYKLPQKVRRLALKSVYSEKVAENKFVAVNSLEFTAPKTAEFAKVLAALSIDSKVLVILEEGNEFAALSARNIPGVKVATATTASVLDIANADKLLVTQAAISKIEEVLA</sequence>
<protein>
    <recommendedName>
        <fullName evidence="1">Large ribosomal subunit protein uL4</fullName>
    </recommendedName>
    <alternativeName>
        <fullName evidence="3">50S ribosomal protein L4</fullName>
    </alternativeName>
</protein>
<name>RL4_STRS2</name>
<evidence type="ECO:0000255" key="1">
    <source>
        <dbReference type="HAMAP-Rule" id="MF_01328"/>
    </source>
</evidence>
<evidence type="ECO:0000256" key="2">
    <source>
        <dbReference type="SAM" id="MobiDB-lite"/>
    </source>
</evidence>
<evidence type="ECO:0000305" key="3"/>
<keyword id="KW-0687">Ribonucleoprotein</keyword>
<keyword id="KW-0689">Ribosomal protein</keyword>
<keyword id="KW-0694">RNA-binding</keyword>
<keyword id="KW-0699">rRNA-binding</keyword>
<comment type="function">
    <text evidence="1">One of the primary rRNA binding proteins, this protein initially binds near the 5'-end of the 23S rRNA. It is important during the early stages of 50S assembly. It makes multiple contacts with different domains of the 23S rRNA in the assembled 50S subunit and ribosome.</text>
</comment>
<comment type="function">
    <text evidence="1">Forms part of the polypeptide exit tunnel.</text>
</comment>
<comment type="subunit">
    <text evidence="1">Part of the 50S ribosomal subunit.</text>
</comment>
<comment type="similarity">
    <text evidence="1">Belongs to the universal ribosomal protein uL4 family.</text>
</comment>
<feature type="chain" id="PRO_1000052513" description="Large ribosomal subunit protein uL4">
    <location>
        <begin position="1"/>
        <end position="207"/>
    </location>
</feature>
<feature type="region of interest" description="Disordered" evidence="2">
    <location>
        <begin position="49"/>
        <end position="78"/>
    </location>
</feature>
<reference key="1">
    <citation type="journal article" date="2007" name="PLoS ONE">
        <title>A glimpse of streptococcal toxic shock syndrome from comparative genomics of S. suis 2 Chinese isolates.</title>
        <authorList>
            <person name="Chen C."/>
            <person name="Tang J."/>
            <person name="Dong W."/>
            <person name="Wang C."/>
            <person name="Feng Y."/>
            <person name="Wang J."/>
            <person name="Zheng F."/>
            <person name="Pan X."/>
            <person name="Liu D."/>
            <person name="Li M."/>
            <person name="Song Y."/>
            <person name="Zhu X."/>
            <person name="Sun H."/>
            <person name="Feng T."/>
            <person name="Guo Z."/>
            <person name="Ju A."/>
            <person name="Ge J."/>
            <person name="Dong Y."/>
            <person name="Sun W."/>
            <person name="Jiang Y."/>
            <person name="Wang J."/>
            <person name="Yan J."/>
            <person name="Yang H."/>
            <person name="Wang X."/>
            <person name="Gao G.F."/>
            <person name="Yang R."/>
            <person name="Wang J."/>
            <person name="Yu J."/>
        </authorList>
    </citation>
    <scope>NUCLEOTIDE SEQUENCE [LARGE SCALE GENOMIC DNA]</scope>
    <source>
        <strain>98HAH33</strain>
    </source>
</reference>
<proteinExistence type="inferred from homology"/>
<dbReference type="EMBL" id="CP000408">
    <property type="protein sequence ID" value="ABP91233.1"/>
    <property type="molecule type" value="Genomic_DNA"/>
</dbReference>
<dbReference type="SMR" id="A4VYP4"/>
<dbReference type="KEGG" id="ssv:SSU98_0073"/>
<dbReference type="HOGENOM" id="CLU_041575_5_2_9"/>
<dbReference type="GO" id="GO:1990904">
    <property type="term" value="C:ribonucleoprotein complex"/>
    <property type="evidence" value="ECO:0007669"/>
    <property type="project" value="UniProtKB-KW"/>
</dbReference>
<dbReference type="GO" id="GO:0005840">
    <property type="term" value="C:ribosome"/>
    <property type="evidence" value="ECO:0007669"/>
    <property type="project" value="UniProtKB-KW"/>
</dbReference>
<dbReference type="GO" id="GO:0019843">
    <property type="term" value="F:rRNA binding"/>
    <property type="evidence" value="ECO:0007669"/>
    <property type="project" value="UniProtKB-UniRule"/>
</dbReference>
<dbReference type="GO" id="GO:0003735">
    <property type="term" value="F:structural constituent of ribosome"/>
    <property type="evidence" value="ECO:0007669"/>
    <property type="project" value="InterPro"/>
</dbReference>
<dbReference type="GO" id="GO:0006412">
    <property type="term" value="P:translation"/>
    <property type="evidence" value="ECO:0007669"/>
    <property type="project" value="UniProtKB-UniRule"/>
</dbReference>
<dbReference type="FunFam" id="3.40.1370.10:FF:000003">
    <property type="entry name" value="50S ribosomal protein L4"/>
    <property type="match status" value="1"/>
</dbReference>
<dbReference type="Gene3D" id="3.40.1370.10">
    <property type="match status" value="1"/>
</dbReference>
<dbReference type="HAMAP" id="MF_01328_B">
    <property type="entry name" value="Ribosomal_uL4_B"/>
    <property type="match status" value="1"/>
</dbReference>
<dbReference type="InterPro" id="IPR002136">
    <property type="entry name" value="Ribosomal_uL4"/>
</dbReference>
<dbReference type="InterPro" id="IPR013005">
    <property type="entry name" value="Ribosomal_uL4-like"/>
</dbReference>
<dbReference type="InterPro" id="IPR023574">
    <property type="entry name" value="Ribosomal_uL4_dom_sf"/>
</dbReference>
<dbReference type="NCBIfam" id="TIGR03953">
    <property type="entry name" value="rplD_bact"/>
    <property type="match status" value="1"/>
</dbReference>
<dbReference type="PANTHER" id="PTHR10746">
    <property type="entry name" value="50S RIBOSOMAL PROTEIN L4"/>
    <property type="match status" value="1"/>
</dbReference>
<dbReference type="PANTHER" id="PTHR10746:SF6">
    <property type="entry name" value="LARGE RIBOSOMAL SUBUNIT PROTEIN UL4M"/>
    <property type="match status" value="1"/>
</dbReference>
<dbReference type="Pfam" id="PF00573">
    <property type="entry name" value="Ribosomal_L4"/>
    <property type="match status" value="1"/>
</dbReference>
<dbReference type="SUPFAM" id="SSF52166">
    <property type="entry name" value="Ribosomal protein L4"/>
    <property type="match status" value="1"/>
</dbReference>
<organism>
    <name type="scientific">Streptococcus suis (strain 98HAH33)</name>
    <dbReference type="NCBI Taxonomy" id="391296"/>
    <lineage>
        <taxon>Bacteria</taxon>
        <taxon>Bacillati</taxon>
        <taxon>Bacillota</taxon>
        <taxon>Bacilli</taxon>
        <taxon>Lactobacillales</taxon>
        <taxon>Streptococcaceae</taxon>
        <taxon>Streptococcus</taxon>
    </lineage>
</organism>
<accession>A4VYP4</accession>